<reference key="1">
    <citation type="submission" date="2008-02" db="EMBL/GenBank/DDBJ databases">
        <title>Complete sequence of Yersinia pseudotuberculosis YPIII.</title>
        <authorList>
            <consortium name="US DOE Joint Genome Institute"/>
            <person name="Copeland A."/>
            <person name="Lucas S."/>
            <person name="Lapidus A."/>
            <person name="Glavina del Rio T."/>
            <person name="Dalin E."/>
            <person name="Tice H."/>
            <person name="Bruce D."/>
            <person name="Goodwin L."/>
            <person name="Pitluck S."/>
            <person name="Munk A.C."/>
            <person name="Brettin T."/>
            <person name="Detter J.C."/>
            <person name="Han C."/>
            <person name="Tapia R."/>
            <person name="Schmutz J."/>
            <person name="Larimer F."/>
            <person name="Land M."/>
            <person name="Hauser L."/>
            <person name="Challacombe J.F."/>
            <person name="Green L."/>
            <person name="Lindler L.E."/>
            <person name="Nikolich M.P."/>
            <person name="Richardson P."/>
        </authorList>
    </citation>
    <scope>NUCLEOTIDE SEQUENCE [LARGE SCALE GENOMIC DNA]</scope>
    <source>
        <strain>YPIII</strain>
    </source>
</reference>
<protein>
    <recommendedName>
        <fullName evidence="1">Lysophospholipid transporter LplT</fullName>
    </recommendedName>
</protein>
<feature type="chain" id="PRO_1000201284" description="Lysophospholipid transporter LplT">
    <location>
        <begin position="1"/>
        <end position="406"/>
    </location>
</feature>
<feature type="transmembrane region" description="Helical" evidence="1">
    <location>
        <begin position="16"/>
        <end position="36"/>
    </location>
</feature>
<feature type="transmembrane region" description="Helical" evidence="1">
    <location>
        <begin position="53"/>
        <end position="73"/>
    </location>
</feature>
<feature type="transmembrane region" description="Helical" evidence="1">
    <location>
        <begin position="91"/>
        <end position="111"/>
    </location>
</feature>
<feature type="transmembrane region" description="Helical" evidence="1">
    <location>
        <begin position="139"/>
        <end position="159"/>
    </location>
</feature>
<feature type="transmembrane region" description="Helical" evidence="1">
    <location>
        <begin position="164"/>
        <end position="184"/>
    </location>
</feature>
<feature type="transmembrane region" description="Helical" evidence="1">
    <location>
        <begin position="227"/>
        <end position="247"/>
    </location>
</feature>
<feature type="transmembrane region" description="Helical" evidence="1">
    <location>
        <begin position="253"/>
        <end position="273"/>
    </location>
</feature>
<feature type="transmembrane region" description="Helical" evidence="1">
    <location>
        <begin position="285"/>
        <end position="305"/>
    </location>
</feature>
<feature type="transmembrane region" description="Helical" evidence="1">
    <location>
        <begin position="310"/>
        <end position="330"/>
    </location>
</feature>
<feature type="transmembrane region" description="Helical" evidence="1">
    <location>
        <begin position="349"/>
        <end position="369"/>
    </location>
</feature>
<feature type="transmembrane region" description="Helical" evidence="1">
    <location>
        <begin position="372"/>
        <end position="392"/>
    </location>
</feature>
<comment type="function">
    <text evidence="1">Catalyzes the facilitated diffusion of 2-acyl-glycero-3-phosphoethanolamine (2-acyl-GPE) into the cell.</text>
</comment>
<comment type="subcellular location">
    <subcellularLocation>
        <location evidence="1">Cell inner membrane</location>
        <topology evidence="1">Multi-pass membrane protein</topology>
    </subcellularLocation>
</comment>
<comment type="similarity">
    <text evidence="1">Belongs to the major facilitator superfamily. LplT (TC 2.A.1.42) family.</text>
</comment>
<organism>
    <name type="scientific">Yersinia pseudotuberculosis serotype O:3 (strain YPIII)</name>
    <dbReference type="NCBI Taxonomy" id="502800"/>
    <lineage>
        <taxon>Bacteria</taxon>
        <taxon>Pseudomonadati</taxon>
        <taxon>Pseudomonadota</taxon>
        <taxon>Gammaproteobacteria</taxon>
        <taxon>Enterobacterales</taxon>
        <taxon>Yersiniaceae</taxon>
        <taxon>Yersinia</taxon>
    </lineage>
</organism>
<dbReference type="EMBL" id="CP000950">
    <property type="protein sequence ID" value="ACA67329.1"/>
    <property type="molecule type" value="Genomic_DNA"/>
</dbReference>
<dbReference type="RefSeq" id="WP_002209842.1">
    <property type="nucleotide sequence ID" value="NZ_CP009792.1"/>
</dbReference>
<dbReference type="SMR" id="B1JQC2"/>
<dbReference type="GeneID" id="96662409"/>
<dbReference type="KEGG" id="ypy:YPK_1028"/>
<dbReference type="PATRIC" id="fig|502800.11.peg.1660"/>
<dbReference type="GO" id="GO:0005886">
    <property type="term" value="C:plasma membrane"/>
    <property type="evidence" value="ECO:0007669"/>
    <property type="project" value="UniProtKB-SubCell"/>
</dbReference>
<dbReference type="GO" id="GO:0051978">
    <property type="term" value="F:lysophospholipid:sodium symporter activity"/>
    <property type="evidence" value="ECO:0007669"/>
    <property type="project" value="InterPro"/>
</dbReference>
<dbReference type="CDD" id="cd06173">
    <property type="entry name" value="MFS_MefA_like"/>
    <property type="match status" value="1"/>
</dbReference>
<dbReference type="Gene3D" id="1.20.1250.20">
    <property type="entry name" value="MFS general substrate transporter like domains"/>
    <property type="match status" value="1"/>
</dbReference>
<dbReference type="HAMAP" id="MF_01585">
    <property type="entry name" value="MFS_LplT"/>
    <property type="match status" value="1"/>
</dbReference>
<dbReference type="InterPro" id="IPR023727">
    <property type="entry name" value="LysoPLipid__transptr_LplT"/>
</dbReference>
<dbReference type="InterPro" id="IPR011701">
    <property type="entry name" value="MFS"/>
</dbReference>
<dbReference type="InterPro" id="IPR036259">
    <property type="entry name" value="MFS_trans_sf"/>
</dbReference>
<dbReference type="NCBIfam" id="NF008397">
    <property type="entry name" value="PRK11195.1"/>
    <property type="match status" value="1"/>
</dbReference>
<dbReference type="PANTHER" id="PTHR43266">
    <property type="entry name" value="MACROLIDE-EFFLUX PROTEIN"/>
    <property type="match status" value="1"/>
</dbReference>
<dbReference type="PANTHER" id="PTHR43266:SF2">
    <property type="entry name" value="MAJOR FACILITATOR SUPERFAMILY (MFS) PROFILE DOMAIN-CONTAINING PROTEIN"/>
    <property type="match status" value="1"/>
</dbReference>
<dbReference type="Pfam" id="PF07690">
    <property type="entry name" value="MFS_1"/>
    <property type="match status" value="1"/>
</dbReference>
<dbReference type="SUPFAM" id="SSF103473">
    <property type="entry name" value="MFS general substrate transporter"/>
    <property type="match status" value="1"/>
</dbReference>
<proteinExistence type="inferred from homology"/>
<sequence>MSQDVLADKPLLSRSMVAVLCAQFFSAFGDNALLFATLALIKQQLYPDWSQPILQMAFVATYIVLAPFVGQIADGFAKGRVMMVANGLKLAGALVICFGLNPFLGYSLVGVGAAAYSPAKYGILGEITSGEQLVKANGMMEASTIAAILLGSVAGGILADWHLMAALGVCALVYAIAVIANLFIPRLAAARSGASWRPRAMTGSFFTACRLLWQDSETRFSLAGTSLFWGAGVTLRFLLVLWVPVALGIADNATPTLLNAMVAIGIVVGAGAAARFVTLKTVKRCLPAGVLIGVMVTIFSLQNSMPMAYLLLIIIGILGGFFVVPLNALLQERGKHSVGAGNAIAVQNLGENTAMLFMLGLYSLVVKLGAPVVAVGVGFGVVFALAIALLWGWQWRQQRQKTRQPE</sequence>
<accession>B1JQC2</accession>
<keyword id="KW-0997">Cell inner membrane</keyword>
<keyword id="KW-1003">Cell membrane</keyword>
<keyword id="KW-0445">Lipid transport</keyword>
<keyword id="KW-0472">Membrane</keyword>
<keyword id="KW-0812">Transmembrane</keyword>
<keyword id="KW-1133">Transmembrane helix</keyword>
<keyword id="KW-0813">Transport</keyword>
<gene>
    <name evidence="1" type="primary">lplT</name>
    <name type="ordered locus">YPK_1028</name>
</gene>
<name>LPLT_YERPY</name>
<evidence type="ECO:0000255" key="1">
    <source>
        <dbReference type="HAMAP-Rule" id="MF_01585"/>
    </source>
</evidence>